<comment type="function">
    <text evidence="1">Promotes mitochondrial protein synthesis. May act as a fidelity factor of the translation reaction, by catalyzing a one-codon backward translocation of tRNAs on improperly translocated ribosomes. Binds to mitochondrial ribosomes in a GTP-dependent manner.</text>
</comment>
<comment type="catalytic activity">
    <reaction evidence="1">
        <text>GTP + H2O = GDP + phosphate + H(+)</text>
        <dbReference type="Rhea" id="RHEA:19669"/>
        <dbReference type="ChEBI" id="CHEBI:15377"/>
        <dbReference type="ChEBI" id="CHEBI:15378"/>
        <dbReference type="ChEBI" id="CHEBI:37565"/>
        <dbReference type="ChEBI" id="CHEBI:43474"/>
        <dbReference type="ChEBI" id="CHEBI:58189"/>
    </reaction>
</comment>
<comment type="subcellular location">
    <subcellularLocation>
        <location evidence="1">Mitochondrion inner membrane</location>
        <topology evidence="1">Peripheral membrane protein</topology>
        <orientation evidence="1">Matrix side</orientation>
    </subcellularLocation>
</comment>
<comment type="miscellaneous">
    <text evidence="1">This protein may be expected to contain an N-terminal transit peptide but none has been predicted.</text>
</comment>
<comment type="similarity">
    <text evidence="2">Belongs to the TRAFAC class translation factor GTPase superfamily. Classic translation factor GTPase family. LepA subfamily.</text>
</comment>
<name>GUF1_CANDC</name>
<proteinExistence type="inferred from homology"/>
<dbReference type="EC" id="3.6.5.-"/>
<dbReference type="EMBL" id="FM992689">
    <property type="protein sequence ID" value="CAX43840.1"/>
    <property type="molecule type" value="Genomic_DNA"/>
</dbReference>
<dbReference type="RefSeq" id="XP_002418538.1">
    <property type="nucleotide sequence ID" value="XM_002418493.1"/>
</dbReference>
<dbReference type="SMR" id="B9WBR8"/>
<dbReference type="GeneID" id="8046084"/>
<dbReference type="KEGG" id="cdu:CD36_20590"/>
<dbReference type="CGD" id="CAL0000167422">
    <property type="gene designation" value="Cd36_20590"/>
</dbReference>
<dbReference type="VEuPathDB" id="FungiDB:CD36_20590"/>
<dbReference type="eggNOG" id="KOG0462">
    <property type="taxonomic scope" value="Eukaryota"/>
</dbReference>
<dbReference type="HOGENOM" id="CLU_009995_3_1_1"/>
<dbReference type="OrthoDB" id="1074at2759"/>
<dbReference type="Proteomes" id="UP000002605">
    <property type="component" value="Chromosome 2"/>
</dbReference>
<dbReference type="GO" id="GO:0005743">
    <property type="term" value="C:mitochondrial inner membrane"/>
    <property type="evidence" value="ECO:0007669"/>
    <property type="project" value="UniProtKB-SubCell"/>
</dbReference>
<dbReference type="GO" id="GO:0005759">
    <property type="term" value="C:mitochondrial matrix"/>
    <property type="evidence" value="ECO:0007669"/>
    <property type="project" value="UniProtKB-UniRule"/>
</dbReference>
<dbReference type="GO" id="GO:0005525">
    <property type="term" value="F:GTP binding"/>
    <property type="evidence" value="ECO:0007669"/>
    <property type="project" value="UniProtKB-UniRule"/>
</dbReference>
<dbReference type="GO" id="GO:0003924">
    <property type="term" value="F:GTPase activity"/>
    <property type="evidence" value="ECO:0007669"/>
    <property type="project" value="UniProtKB-UniRule"/>
</dbReference>
<dbReference type="GO" id="GO:0097177">
    <property type="term" value="F:mitochondrial ribosome binding"/>
    <property type="evidence" value="ECO:0007669"/>
    <property type="project" value="TreeGrafter"/>
</dbReference>
<dbReference type="GO" id="GO:0045727">
    <property type="term" value="P:positive regulation of translation"/>
    <property type="evidence" value="ECO:0007669"/>
    <property type="project" value="UniProtKB-UniRule"/>
</dbReference>
<dbReference type="GO" id="GO:0006412">
    <property type="term" value="P:translation"/>
    <property type="evidence" value="ECO:0007669"/>
    <property type="project" value="UniProtKB-KW"/>
</dbReference>
<dbReference type="CDD" id="cd03699">
    <property type="entry name" value="EF4_II"/>
    <property type="match status" value="1"/>
</dbReference>
<dbReference type="CDD" id="cd16260">
    <property type="entry name" value="EF4_III"/>
    <property type="match status" value="1"/>
</dbReference>
<dbReference type="CDD" id="cd01890">
    <property type="entry name" value="LepA"/>
    <property type="match status" value="1"/>
</dbReference>
<dbReference type="CDD" id="cd03709">
    <property type="entry name" value="lepA_C"/>
    <property type="match status" value="1"/>
</dbReference>
<dbReference type="FunFam" id="3.40.50.300:FF:000078">
    <property type="entry name" value="Elongation factor 4"/>
    <property type="match status" value="1"/>
</dbReference>
<dbReference type="FunFam" id="2.40.30.10:FF:000015">
    <property type="entry name" value="Translation factor GUF1, mitochondrial"/>
    <property type="match status" value="1"/>
</dbReference>
<dbReference type="FunFam" id="3.30.70.240:FF:000007">
    <property type="entry name" value="Translation factor GUF1, mitochondrial"/>
    <property type="match status" value="1"/>
</dbReference>
<dbReference type="FunFam" id="3.30.70.2570:FF:000001">
    <property type="entry name" value="Translation factor GUF1, mitochondrial"/>
    <property type="match status" value="1"/>
</dbReference>
<dbReference type="FunFam" id="3.30.70.870:FF:000004">
    <property type="entry name" value="Translation factor GUF1, mitochondrial"/>
    <property type="match status" value="1"/>
</dbReference>
<dbReference type="Gene3D" id="3.30.70.240">
    <property type="match status" value="1"/>
</dbReference>
<dbReference type="Gene3D" id="3.30.70.2570">
    <property type="entry name" value="Elongation factor 4, C-terminal domain"/>
    <property type="match status" value="1"/>
</dbReference>
<dbReference type="Gene3D" id="3.30.70.870">
    <property type="entry name" value="Elongation Factor G (Translational Gtpase), domain 3"/>
    <property type="match status" value="1"/>
</dbReference>
<dbReference type="Gene3D" id="3.40.50.300">
    <property type="entry name" value="P-loop containing nucleotide triphosphate hydrolases"/>
    <property type="match status" value="1"/>
</dbReference>
<dbReference type="Gene3D" id="2.40.30.10">
    <property type="entry name" value="Translation factors"/>
    <property type="match status" value="1"/>
</dbReference>
<dbReference type="HAMAP" id="MF_00071">
    <property type="entry name" value="LepA"/>
    <property type="match status" value="1"/>
</dbReference>
<dbReference type="InterPro" id="IPR006297">
    <property type="entry name" value="EF-4"/>
</dbReference>
<dbReference type="InterPro" id="IPR035647">
    <property type="entry name" value="EFG_III/V"/>
</dbReference>
<dbReference type="InterPro" id="IPR000640">
    <property type="entry name" value="EFG_V-like"/>
</dbReference>
<dbReference type="InterPro" id="IPR004161">
    <property type="entry name" value="EFTu-like_2"/>
</dbReference>
<dbReference type="InterPro" id="IPR031157">
    <property type="entry name" value="G_TR_CS"/>
</dbReference>
<dbReference type="InterPro" id="IPR038363">
    <property type="entry name" value="LepA_C_sf"/>
</dbReference>
<dbReference type="InterPro" id="IPR013842">
    <property type="entry name" value="LepA_CTD"/>
</dbReference>
<dbReference type="InterPro" id="IPR035654">
    <property type="entry name" value="LepA_IV"/>
</dbReference>
<dbReference type="InterPro" id="IPR027417">
    <property type="entry name" value="P-loop_NTPase"/>
</dbReference>
<dbReference type="InterPro" id="IPR005225">
    <property type="entry name" value="Small_GTP-bd"/>
</dbReference>
<dbReference type="InterPro" id="IPR000795">
    <property type="entry name" value="T_Tr_GTP-bd_dom"/>
</dbReference>
<dbReference type="InterPro" id="IPR009000">
    <property type="entry name" value="Transl_B-barrel_sf"/>
</dbReference>
<dbReference type="NCBIfam" id="TIGR01393">
    <property type="entry name" value="lepA"/>
    <property type="match status" value="1"/>
</dbReference>
<dbReference type="NCBIfam" id="TIGR00231">
    <property type="entry name" value="small_GTP"/>
    <property type="match status" value="1"/>
</dbReference>
<dbReference type="PANTHER" id="PTHR43512:SF7">
    <property type="entry name" value="TRANSLATION FACTOR GUF1, MITOCHONDRIAL"/>
    <property type="match status" value="1"/>
</dbReference>
<dbReference type="PANTHER" id="PTHR43512">
    <property type="entry name" value="TRANSLATION FACTOR GUF1-RELATED"/>
    <property type="match status" value="1"/>
</dbReference>
<dbReference type="Pfam" id="PF00679">
    <property type="entry name" value="EFG_C"/>
    <property type="match status" value="1"/>
</dbReference>
<dbReference type="Pfam" id="PF00009">
    <property type="entry name" value="GTP_EFTU"/>
    <property type="match status" value="1"/>
</dbReference>
<dbReference type="Pfam" id="PF03144">
    <property type="entry name" value="GTP_EFTU_D2"/>
    <property type="match status" value="1"/>
</dbReference>
<dbReference type="Pfam" id="PF06421">
    <property type="entry name" value="LepA_C"/>
    <property type="match status" value="1"/>
</dbReference>
<dbReference type="PRINTS" id="PR00315">
    <property type="entry name" value="ELONGATNFCT"/>
</dbReference>
<dbReference type="SUPFAM" id="SSF54980">
    <property type="entry name" value="EF-G C-terminal domain-like"/>
    <property type="match status" value="2"/>
</dbReference>
<dbReference type="SUPFAM" id="SSF52540">
    <property type="entry name" value="P-loop containing nucleoside triphosphate hydrolases"/>
    <property type="match status" value="1"/>
</dbReference>
<dbReference type="SUPFAM" id="SSF50447">
    <property type="entry name" value="Translation proteins"/>
    <property type="match status" value="1"/>
</dbReference>
<dbReference type="PROSITE" id="PS00301">
    <property type="entry name" value="G_TR_1"/>
    <property type="match status" value="1"/>
</dbReference>
<dbReference type="PROSITE" id="PS51722">
    <property type="entry name" value="G_TR_2"/>
    <property type="match status" value="1"/>
</dbReference>
<gene>
    <name evidence="1" type="primary">GUF1</name>
    <name type="ORF">CD36_20590</name>
</gene>
<accession>B9WBR8</accession>
<reference key="1">
    <citation type="journal article" date="2009" name="Genome Res.">
        <title>Comparative genomics of the fungal pathogens Candida dubliniensis and Candida albicans.</title>
        <authorList>
            <person name="Jackson A.P."/>
            <person name="Gamble J.A."/>
            <person name="Yeomans T."/>
            <person name="Moran G.P."/>
            <person name="Saunders D."/>
            <person name="Harris D."/>
            <person name="Aslett M."/>
            <person name="Barrell J.F."/>
            <person name="Butler G."/>
            <person name="Citiulo F."/>
            <person name="Coleman D.C."/>
            <person name="de Groot P.W.J."/>
            <person name="Goodwin T.J."/>
            <person name="Quail M.A."/>
            <person name="McQuillan J."/>
            <person name="Munro C.A."/>
            <person name="Pain A."/>
            <person name="Poulter R.T."/>
            <person name="Rajandream M.A."/>
            <person name="Renauld H."/>
            <person name="Spiering M.J."/>
            <person name="Tivey A."/>
            <person name="Gow N.A.R."/>
            <person name="Barrell B."/>
            <person name="Sullivan D.J."/>
            <person name="Berriman M."/>
        </authorList>
    </citation>
    <scope>NUCLEOTIDE SEQUENCE [LARGE SCALE GENOMIC DNA]</scope>
    <source>
        <strain>CD36 / ATCC MYA-646 / CBS 7987 / NCPF 3949 / NRRL Y-17841</strain>
    </source>
</reference>
<protein>
    <recommendedName>
        <fullName evidence="1">Translation factor GUF1, mitochondrial</fullName>
        <ecNumber>3.6.5.-</ecNumber>
    </recommendedName>
    <alternativeName>
        <fullName evidence="1">Elongation factor 4 homolog</fullName>
        <shortName evidence="1">EF-4</shortName>
    </alternativeName>
    <alternativeName>
        <fullName evidence="1">GTPase GUF1</fullName>
    </alternativeName>
    <alternativeName>
        <fullName evidence="1">Ribosomal back-translocase</fullName>
    </alternativeName>
</protein>
<feature type="chain" id="PRO_0000402879" description="Translation factor GUF1, mitochondrial">
    <location>
        <begin position="1"/>
        <end position="654"/>
    </location>
</feature>
<feature type="domain" description="tr-type G">
    <location>
        <begin position="57"/>
        <end position="237"/>
    </location>
</feature>
<feature type="binding site" evidence="1">
    <location>
        <begin position="66"/>
        <end position="73"/>
    </location>
    <ligand>
        <name>GTP</name>
        <dbReference type="ChEBI" id="CHEBI:37565"/>
    </ligand>
</feature>
<feature type="binding site" evidence="1">
    <location>
        <begin position="130"/>
        <end position="134"/>
    </location>
    <ligand>
        <name>GTP</name>
        <dbReference type="ChEBI" id="CHEBI:37565"/>
    </ligand>
</feature>
<feature type="binding site" evidence="1">
    <location>
        <begin position="184"/>
        <end position="187"/>
    </location>
    <ligand>
        <name>GTP</name>
        <dbReference type="ChEBI" id="CHEBI:37565"/>
    </ligand>
</feature>
<keyword id="KW-0342">GTP-binding</keyword>
<keyword id="KW-0378">Hydrolase</keyword>
<keyword id="KW-0472">Membrane</keyword>
<keyword id="KW-0496">Mitochondrion</keyword>
<keyword id="KW-0999">Mitochondrion inner membrane</keyword>
<keyword id="KW-0547">Nucleotide-binding</keyword>
<keyword id="KW-0648">Protein biosynthesis</keyword>
<evidence type="ECO:0000255" key="1">
    <source>
        <dbReference type="HAMAP-Rule" id="MF_03137"/>
    </source>
</evidence>
<evidence type="ECO:0000305" key="2"/>
<organism>
    <name type="scientific">Candida dubliniensis (strain CD36 / ATCC MYA-646 / CBS 7987 / NCPF 3949 / NRRL Y-17841)</name>
    <name type="common">Yeast</name>
    <dbReference type="NCBI Taxonomy" id="573826"/>
    <lineage>
        <taxon>Eukaryota</taxon>
        <taxon>Fungi</taxon>
        <taxon>Dikarya</taxon>
        <taxon>Ascomycota</taxon>
        <taxon>Saccharomycotina</taxon>
        <taxon>Pichiomycetes</taxon>
        <taxon>Debaryomycetaceae</taxon>
        <taxon>Candida/Lodderomyces clade</taxon>
        <taxon>Candida</taxon>
    </lineage>
</organism>
<sequence length="654" mass="73884">MLLRPKSGNILKYGHFLSKRWLTASKLLYSVEEMKIKISQDQYRKALEERIDKIPIENYRNFSIVAHVDHGKSTLSDRLLEMTGVIKPGSKSQVLDKLDVERERGITVKAQTVSMFYNDGKQDYLLHLVDTPGHVDFRAEVSRSYASCGGALLLVDASQGVQAQTVANFYLAYSMGLKLIPIINKIDLDSANIAGAKEQIETTFELDPNDCIAVSAKTGLNVEQIIPSVIKNIPSPVCDVNKPLRALLVDSWHDPYVGVVMLVHIVDGKMKKGMKILSAHTNRTYDVKEVGIMYPDRTPTSFIKAGQVAYIIPGMKNPREALVGDTFYQMGKHEDLEPLPGFEEPKPMVFVGAFPADGKEFNAMDDQMQNLVLNDRSVTLEQETSNALGLGWRLGFLGSLHASVFKERLEKEYGAKIILTAPTVPYKIIYKNGEEKIVTNPDDFPDNQKHYDVESYMEPYVEAIMTVPNEYIGNVMTLCLNNRGEQKEIEYLTTGQVLLKYEIPTSQLVEDFFGKLKGCTKGYASLDYEEAGYRKSDIVKMQLCVNGEPQDALTTVIHRSQAQARGKEYVTRFKKYLSYQLFEVAIQAKINNKVVARETIKAKRKDVTQRLHAADISRYKKLLERQKEGKKQMKLSGKVTIKNDAYQAFLRRED</sequence>